<comment type="function">
    <text evidence="1">Involved in the biosynthesis of branched-chain amino acids (BCAA). Catalyzes an alkyl-migration followed by a ketol-acid reduction of (S)-2-acetolactate (S2AL) to yield (R)-2,3-dihydroxy-isovalerate. In the isomerase reaction, S2AL is rearranged via a Mg-dependent methyl migration to produce 3-hydroxy-3-methyl-2-ketobutyrate (HMKB). In the reductase reaction, this 2-ketoacid undergoes a metal-dependent reduction by NADPH to yield (R)-2,3-dihydroxy-isovalerate.</text>
</comment>
<comment type="catalytic activity">
    <reaction evidence="1">
        <text>(2R)-2,3-dihydroxy-3-methylbutanoate + NADP(+) = (2S)-2-acetolactate + NADPH + H(+)</text>
        <dbReference type="Rhea" id="RHEA:22068"/>
        <dbReference type="ChEBI" id="CHEBI:15378"/>
        <dbReference type="ChEBI" id="CHEBI:49072"/>
        <dbReference type="ChEBI" id="CHEBI:57783"/>
        <dbReference type="ChEBI" id="CHEBI:58349"/>
        <dbReference type="ChEBI" id="CHEBI:58476"/>
        <dbReference type="EC" id="1.1.1.86"/>
    </reaction>
</comment>
<comment type="catalytic activity">
    <reaction evidence="1">
        <text>(2R,3R)-2,3-dihydroxy-3-methylpentanoate + NADP(+) = (S)-2-ethyl-2-hydroxy-3-oxobutanoate + NADPH + H(+)</text>
        <dbReference type="Rhea" id="RHEA:13493"/>
        <dbReference type="ChEBI" id="CHEBI:15378"/>
        <dbReference type="ChEBI" id="CHEBI:49256"/>
        <dbReference type="ChEBI" id="CHEBI:49258"/>
        <dbReference type="ChEBI" id="CHEBI:57783"/>
        <dbReference type="ChEBI" id="CHEBI:58349"/>
        <dbReference type="EC" id="1.1.1.86"/>
    </reaction>
</comment>
<comment type="cofactor">
    <cofactor evidence="1">
        <name>Mg(2+)</name>
        <dbReference type="ChEBI" id="CHEBI:18420"/>
    </cofactor>
    <text evidence="1">Binds 2 magnesium ions per subunit.</text>
</comment>
<comment type="pathway">
    <text evidence="1">Amino-acid biosynthesis; L-isoleucine biosynthesis; L-isoleucine from 2-oxobutanoate: step 2/4.</text>
</comment>
<comment type="pathway">
    <text evidence="1">Amino-acid biosynthesis; L-valine biosynthesis; L-valine from pyruvate: step 2/4.</text>
</comment>
<comment type="similarity">
    <text evidence="1">Belongs to the ketol-acid reductoisomerase family.</text>
</comment>
<gene>
    <name evidence="1" type="primary">ilvC</name>
    <name type="ordered locus">Syncc9902_1550</name>
</gene>
<evidence type="ECO:0000255" key="1">
    <source>
        <dbReference type="HAMAP-Rule" id="MF_00435"/>
    </source>
</evidence>
<evidence type="ECO:0000255" key="2">
    <source>
        <dbReference type="PROSITE-ProRule" id="PRU01197"/>
    </source>
</evidence>
<evidence type="ECO:0000255" key="3">
    <source>
        <dbReference type="PROSITE-ProRule" id="PRU01198"/>
    </source>
</evidence>
<dbReference type="EC" id="1.1.1.86" evidence="1"/>
<dbReference type="EMBL" id="CP000097">
    <property type="protein sequence ID" value="ABB26508.1"/>
    <property type="molecule type" value="Genomic_DNA"/>
</dbReference>
<dbReference type="RefSeq" id="WP_011360326.1">
    <property type="nucleotide sequence ID" value="NC_007513.1"/>
</dbReference>
<dbReference type="SMR" id="Q3AVC2"/>
<dbReference type="STRING" id="316279.Syncc9902_1550"/>
<dbReference type="KEGG" id="sye:Syncc9902_1550"/>
<dbReference type="eggNOG" id="COG0059">
    <property type="taxonomic scope" value="Bacteria"/>
</dbReference>
<dbReference type="HOGENOM" id="CLU_033821_0_1_3"/>
<dbReference type="OrthoDB" id="9804088at2"/>
<dbReference type="UniPathway" id="UPA00047">
    <property type="reaction ID" value="UER00056"/>
</dbReference>
<dbReference type="UniPathway" id="UPA00049">
    <property type="reaction ID" value="UER00060"/>
</dbReference>
<dbReference type="Proteomes" id="UP000002712">
    <property type="component" value="Chromosome"/>
</dbReference>
<dbReference type="GO" id="GO:0005829">
    <property type="term" value="C:cytosol"/>
    <property type="evidence" value="ECO:0007669"/>
    <property type="project" value="TreeGrafter"/>
</dbReference>
<dbReference type="GO" id="GO:0004455">
    <property type="term" value="F:ketol-acid reductoisomerase activity"/>
    <property type="evidence" value="ECO:0007669"/>
    <property type="project" value="UniProtKB-UniRule"/>
</dbReference>
<dbReference type="GO" id="GO:0000287">
    <property type="term" value="F:magnesium ion binding"/>
    <property type="evidence" value="ECO:0007669"/>
    <property type="project" value="UniProtKB-UniRule"/>
</dbReference>
<dbReference type="GO" id="GO:0050661">
    <property type="term" value="F:NADP binding"/>
    <property type="evidence" value="ECO:0007669"/>
    <property type="project" value="InterPro"/>
</dbReference>
<dbReference type="GO" id="GO:0009097">
    <property type="term" value="P:isoleucine biosynthetic process"/>
    <property type="evidence" value="ECO:0007669"/>
    <property type="project" value="UniProtKB-UniRule"/>
</dbReference>
<dbReference type="GO" id="GO:0009099">
    <property type="term" value="P:L-valine biosynthetic process"/>
    <property type="evidence" value="ECO:0007669"/>
    <property type="project" value="UniProtKB-UniRule"/>
</dbReference>
<dbReference type="FunFam" id="3.40.50.720:FF:000023">
    <property type="entry name" value="Ketol-acid reductoisomerase (NADP(+))"/>
    <property type="match status" value="1"/>
</dbReference>
<dbReference type="Gene3D" id="6.10.240.10">
    <property type="match status" value="1"/>
</dbReference>
<dbReference type="Gene3D" id="3.40.50.720">
    <property type="entry name" value="NAD(P)-binding Rossmann-like Domain"/>
    <property type="match status" value="1"/>
</dbReference>
<dbReference type="HAMAP" id="MF_00435">
    <property type="entry name" value="IlvC"/>
    <property type="match status" value="1"/>
</dbReference>
<dbReference type="InterPro" id="IPR008927">
    <property type="entry name" value="6-PGluconate_DH-like_C_sf"/>
</dbReference>
<dbReference type="InterPro" id="IPR013023">
    <property type="entry name" value="KARI"/>
</dbReference>
<dbReference type="InterPro" id="IPR000506">
    <property type="entry name" value="KARI_C"/>
</dbReference>
<dbReference type="InterPro" id="IPR013116">
    <property type="entry name" value="KARI_N"/>
</dbReference>
<dbReference type="InterPro" id="IPR014359">
    <property type="entry name" value="KARI_prok"/>
</dbReference>
<dbReference type="InterPro" id="IPR036291">
    <property type="entry name" value="NAD(P)-bd_dom_sf"/>
</dbReference>
<dbReference type="NCBIfam" id="TIGR00465">
    <property type="entry name" value="ilvC"/>
    <property type="match status" value="1"/>
</dbReference>
<dbReference type="NCBIfam" id="NF004017">
    <property type="entry name" value="PRK05479.1"/>
    <property type="match status" value="1"/>
</dbReference>
<dbReference type="NCBIfam" id="NF009940">
    <property type="entry name" value="PRK13403.1"/>
    <property type="match status" value="1"/>
</dbReference>
<dbReference type="PANTHER" id="PTHR21371">
    <property type="entry name" value="KETOL-ACID REDUCTOISOMERASE, MITOCHONDRIAL"/>
    <property type="match status" value="1"/>
</dbReference>
<dbReference type="PANTHER" id="PTHR21371:SF1">
    <property type="entry name" value="KETOL-ACID REDUCTOISOMERASE, MITOCHONDRIAL"/>
    <property type="match status" value="1"/>
</dbReference>
<dbReference type="Pfam" id="PF01450">
    <property type="entry name" value="KARI_C"/>
    <property type="match status" value="1"/>
</dbReference>
<dbReference type="Pfam" id="PF07991">
    <property type="entry name" value="KARI_N"/>
    <property type="match status" value="1"/>
</dbReference>
<dbReference type="PIRSF" id="PIRSF000116">
    <property type="entry name" value="IlvC_gammaproteo"/>
    <property type="match status" value="1"/>
</dbReference>
<dbReference type="SUPFAM" id="SSF48179">
    <property type="entry name" value="6-phosphogluconate dehydrogenase C-terminal domain-like"/>
    <property type="match status" value="1"/>
</dbReference>
<dbReference type="SUPFAM" id="SSF51735">
    <property type="entry name" value="NAD(P)-binding Rossmann-fold domains"/>
    <property type="match status" value="1"/>
</dbReference>
<dbReference type="PROSITE" id="PS51851">
    <property type="entry name" value="KARI_C"/>
    <property type="match status" value="1"/>
</dbReference>
<dbReference type="PROSITE" id="PS51850">
    <property type="entry name" value="KARI_N"/>
    <property type="match status" value="1"/>
</dbReference>
<keyword id="KW-0028">Amino-acid biosynthesis</keyword>
<keyword id="KW-0100">Branched-chain amino acid biosynthesis</keyword>
<keyword id="KW-0460">Magnesium</keyword>
<keyword id="KW-0479">Metal-binding</keyword>
<keyword id="KW-0521">NADP</keyword>
<keyword id="KW-0560">Oxidoreductase</keyword>
<keyword id="KW-1185">Reference proteome</keyword>
<name>ILVC_SYNS9</name>
<protein>
    <recommendedName>
        <fullName evidence="1">Ketol-acid reductoisomerase (NADP(+))</fullName>
        <shortName evidence="1">KARI</shortName>
        <ecNumber evidence="1">1.1.1.86</ecNumber>
    </recommendedName>
    <alternativeName>
        <fullName evidence="1">Acetohydroxy-acid isomeroreductase</fullName>
        <shortName evidence="1">AHIR</shortName>
    </alternativeName>
    <alternativeName>
        <fullName evidence="1">Alpha-keto-beta-hydroxylacyl reductoisomerase</fullName>
    </alternativeName>
    <alternativeName>
        <fullName evidence="1">Ketol-acid reductoisomerase type 1</fullName>
    </alternativeName>
    <alternativeName>
        <fullName evidence="1">Ketol-acid reductoisomerase type I</fullName>
    </alternativeName>
</protein>
<organism>
    <name type="scientific">Synechococcus sp. (strain CC9902)</name>
    <dbReference type="NCBI Taxonomy" id="316279"/>
    <lineage>
        <taxon>Bacteria</taxon>
        <taxon>Bacillati</taxon>
        <taxon>Cyanobacteriota</taxon>
        <taxon>Cyanophyceae</taxon>
        <taxon>Synechococcales</taxon>
        <taxon>Synechococcaceae</taxon>
        <taxon>Synechococcus</taxon>
    </lineage>
</organism>
<proteinExistence type="inferred from homology"/>
<sequence>MAQLFYDSDADLGLLNGKTVAIIGYGSQGHAHALNLKDSGVNVVVGLYEGSRSAEKAKADGLEVLTVAEASAKADWIMVLLPDEFQKDVYEKEIAPHLKSGKVLSFAHGFNIRFELIKPPADVDVVMIAPKGPGHTVRWEYQNGQGVPALFAIEQDASGNARGLTMAYAKGIGGTRAGILETNFKEETETDLFGEQAVLCGGLSELVKAGFETLVEAGYQPELAYFECMHEVKLIVDLMVKGGLTSMRDSISNTAEYGDYVSGPRLITADTKAEMKRVLADIQDGTFARNFVAECDAGKPEMKKIRDRDAQHPIEKVGKGLRSMFSWLKDA</sequence>
<accession>Q3AVC2</accession>
<feature type="chain" id="PRO_0000252794" description="Ketol-acid reductoisomerase (NADP(+))">
    <location>
        <begin position="1"/>
        <end position="331"/>
    </location>
</feature>
<feature type="domain" description="KARI N-terminal Rossmann" evidence="2">
    <location>
        <begin position="2"/>
        <end position="182"/>
    </location>
</feature>
<feature type="domain" description="KARI C-terminal knotted" evidence="3">
    <location>
        <begin position="183"/>
        <end position="328"/>
    </location>
</feature>
<feature type="active site" evidence="1">
    <location>
        <position position="108"/>
    </location>
</feature>
<feature type="binding site" evidence="1">
    <location>
        <begin position="25"/>
        <end position="28"/>
    </location>
    <ligand>
        <name>NADP(+)</name>
        <dbReference type="ChEBI" id="CHEBI:58349"/>
    </ligand>
</feature>
<feature type="binding site" evidence="1">
    <location>
        <position position="51"/>
    </location>
    <ligand>
        <name>NADP(+)</name>
        <dbReference type="ChEBI" id="CHEBI:58349"/>
    </ligand>
</feature>
<feature type="binding site" evidence="1">
    <location>
        <position position="53"/>
    </location>
    <ligand>
        <name>NADP(+)</name>
        <dbReference type="ChEBI" id="CHEBI:58349"/>
    </ligand>
</feature>
<feature type="binding site" evidence="1">
    <location>
        <begin position="83"/>
        <end position="86"/>
    </location>
    <ligand>
        <name>NADP(+)</name>
        <dbReference type="ChEBI" id="CHEBI:58349"/>
    </ligand>
</feature>
<feature type="binding site" evidence="1">
    <location>
        <position position="134"/>
    </location>
    <ligand>
        <name>NADP(+)</name>
        <dbReference type="ChEBI" id="CHEBI:58349"/>
    </ligand>
</feature>
<feature type="binding site" evidence="1">
    <location>
        <position position="191"/>
    </location>
    <ligand>
        <name>Mg(2+)</name>
        <dbReference type="ChEBI" id="CHEBI:18420"/>
        <label>1</label>
    </ligand>
</feature>
<feature type="binding site" evidence="1">
    <location>
        <position position="191"/>
    </location>
    <ligand>
        <name>Mg(2+)</name>
        <dbReference type="ChEBI" id="CHEBI:18420"/>
        <label>2</label>
    </ligand>
</feature>
<feature type="binding site" evidence="1">
    <location>
        <position position="195"/>
    </location>
    <ligand>
        <name>Mg(2+)</name>
        <dbReference type="ChEBI" id="CHEBI:18420"/>
        <label>1</label>
    </ligand>
</feature>
<feature type="binding site" evidence="1">
    <location>
        <position position="227"/>
    </location>
    <ligand>
        <name>Mg(2+)</name>
        <dbReference type="ChEBI" id="CHEBI:18420"/>
        <label>2</label>
    </ligand>
</feature>
<feature type="binding site" evidence="1">
    <location>
        <position position="231"/>
    </location>
    <ligand>
        <name>Mg(2+)</name>
        <dbReference type="ChEBI" id="CHEBI:18420"/>
        <label>2</label>
    </ligand>
</feature>
<feature type="binding site" evidence="1">
    <location>
        <position position="252"/>
    </location>
    <ligand>
        <name>substrate</name>
    </ligand>
</feature>
<reference key="1">
    <citation type="submission" date="2005-08" db="EMBL/GenBank/DDBJ databases">
        <title>Complete sequence of Synechococcus sp. CC9902.</title>
        <authorList>
            <person name="Copeland A."/>
            <person name="Lucas S."/>
            <person name="Lapidus A."/>
            <person name="Barry K."/>
            <person name="Detter J.C."/>
            <person name="Glavina T."/>
            <person name="Hammon N."/>
            <person name="Israni S."/>
            <person name="Pitluck S."/>
            <person name="Martinez M."/>
            <person name="Schmutz J."/>
            <person name="Larimer F."/>
            <person name="Land M."/>
            <person name="Kyrpides N."/>
            <person name="Ivanova N."/>
            <person name="Richardson P."/>
        </authorList>
    </citation>
    <scope>NUCLEOTIDE SEQUENCE [LARGE SCALE GENOMIC DNA]</scope>
    <source>
        <strain>CC9902</strain>
    </source>
</reference>